<protein>
    <recommendedName>
        <fullName evidence="1">Glucokinase</fullName>
        <ecNumber evidence="1">2.7.1.2</ecNumber>
    </recommendedName>
    <alternativeName>
        <fullName evidence="1">Glucose kinase</fullName>
    </alternativeName>
</protein>
<proteinExistence type="inferred from homology"/>
<accession>B2VE30</accession>
<dbReference type="EC" id="2.7.1.2" evidence="1"/>
<dbReference type="EMBL" id="CU468135">
    <property type="protein sequence ID" value="CAO96160.1"/>
    <property type="molecule type" value="Genomic_DNA"/>
</dbReference>
<dbReference type="RefSeq" id="WP_012440860.1">
    <property type="nucleotide sequence ID" value="NC_010694.1"/>
</dbReference>
<dbReference type="SMR" id="B2VE30"/>
<dbReference type="STRING" id="465817.ETA_11140"/>
<dbReference type="KEGG" id="eta:ETA_11140"/>
<dbReference type="eggNOG" id="COG0837">
    <property type="taxonomic scope" value="Bacteria"/>
</dbReference>
<dbReference type="HOGENOM" id="CLU_042582_1_0_6"/>
<dbReference type="OrthoDB" id="9800595at2"/>
<dbReference type="Proteomes" id="UP000001726">
    <property type="component" value="Chromosome"/>
</dbReference>
<dbReference type="GO" id="GO:0005829">
    <property type="term" value="C:cytosol"/>
    <property type="evidence" value="ECO:0007669"/>
    <property type="project" value="TreeGrafter"/>
</dbReference>
<dbReference type="GO" id="GO:0005524">
    <property type="term" value="F:ATP binding"/>
    <property type="evidence" value="ECO:0007669"/>
    <property type="project" value="UniProtKB-UniRule"/>
</dbReference>
<dbReference type="GO" id="GO:0005536">
    <property type="term" value="F:D-glucose binding"/>
    <property type="evidence" value="ECO:0007669"/>
    <property type="project" value="InterPro"/>
</dbReference>
<dbReference type="GO" id="GO:0004340">
    <property type="term" value="F:glucokinase activity"/>
    <property type="evidence" value="ECO:0007669"/>
    <property type="project" value="UniProtKB-UniRule"/>
</dbReference>
<dbReference type="GO" id="GO:0006096">
    <property type="term" value="P:glycolytic process"/>
    <property type="evidence" value="ECO:0007669"/>
    <property type="project" value="UniProtKB-UniRule"/>
</dbReference>
<dbReference type="CDD" id="cd24008">
    <property type="entry name" value="ASKHA_NBD_GLK"/>
    <property type="match status" value="1"/>
</dbReference>
<dbReference type="FunFam" id="3.40.367.20:FF:000002">
    <property type="entry name" value="Glucokinase"/>
    <property type="match status" value="1"/>
</dbReference>
<dbReference type="Gene3D" id="3.30.420.40">
    <property type="match status" value="1"/>
</dbReference>
<dbReference type="Gene3D" id="3.40.367.20">
    <property type="match status" value="1"/>
</dbReference>
<dbReference type="HAMAP" id="MF_00524">
    <property type="entry name" value="Glucokinase"/>
    <property type="match status" value="1"/>
</dbReference>
<dbReference type="InterPro" id="IPR043129">
    <property type="entry name" value="ATPase_NBD"/>
</dbReference>
<dbReference type="InterPro" id="IPR050201">
    <property type="entry name" value="Bacterial_glucokinase"/>
</dbReference>
<dbReference type="InterPro" id="IPR003836">
    <property type="entry name" value="Glucokinase"/>
</dbReference>
<dbReference type="NCBIfam" id="TIGR00749">
    <property type="entry name" value="glk"/>
    <property type="match status" value="1"/>
</dbReference>
<dbReference type="NCBIfam" id="NF001414">
    <property type="entry name" value="PRK00292.1-1"/>
    <property type="match status" value="1"/>
</dbReference>
<dbReference type="NCBIfam" id="NF001416">
    <property type="entry name" value="PRK00292.1-3"/>
    <property type="match status" value="1"/>
</dbReference>
<dbReference type="PANTHER" id="PTHR47690">
    <property type="entry name" value="GLUCOKINASE"/>
    <property type="match status" value="1"/>
</dbReference>
<dbReference type="PANTHER" id="PTHR47690:SF1">
    <property type="entry name" value="GLUCOKINASE"/>
    <property type="match status" value="1"/>
</dbReference>
<dbReference type="Pfam" id="PF02685">
    <property type="entry name" value="Glucokinase"/>
    <property type="match status" value="1"/>
</dbReference>
<dbReference type="SUPFAM" id="SSF53067">
    <property type="entry name" value="Actin-like ATPase domain"/>
    <property type="match status" value="1"/>
</dbReference>
<name>GLK_ERWT9</name>
<evidence type="ECO:0000255" key="1">
    <source>
        <dbReference type="HAMAP-Rule" id="MF_00524"/>
    </source>
</evidence>
<feature type="chain" id="PRO_1000127707" description="Glucokinase">
    <location>
        <begin position="1"/>
        <end position="321"/>
    </location>
</feature>
<feature type="binding site" evidence="1">
    <location>
        <begin position="8"/>
        <end position="13"/>
    </location>
    <ligand>
        <name>ATP</name>
        <dbReference type="ChEBI" id="CHEBI:30616"/>
    </ligand>
</feature>
<gene>
    <name evidence="1" type="primary">glk</name>
    <name type="ordered locus">ETA_11140</name>
</gene>
<keyword id="KW-0067">ATP-binding</keyword>
<keyword id="KW-0963">Cytoplasm</keyword>
<keyword id="KW-0324">Glycolysis</keyword>
<keyword id="KW-0418">Kinase</keyword>
<keyword id="KW-0547">Nucleotide-binding</keyword>
<keyword id="KW-1185">Reference proteome</keyword>
<keyword id="KW-0808">Transferase</keyword>
<comment type="catalytic activity">
    <reaction evidence="1">
        <text>D-glucose + ATP = D-glucose 6-phosphate + ADP + H(+)</text>
        <dbReference type="Rhea" id="RHEA:17825"/>
        <dbReference type="ChEBI" id="CHEBI:4167"/>
        <dbReference type="ChEBI" id="CHEBI:15378"/>
        <dbReference type="ChEBI" id="CHEBI:30616"/>
        <dbReference type="ChEBI" id="CHEBI:61548"/>
        <dbReference type="ChEBI" id="CHEBI:456216"/>
        <dbReference type="EC" id="2.7.1.2"/>
    </reaction>
</comment>
<comment type="subcellular location">
    <subcellularLocation>
        <location evidence="1">Cytoplasm</location>
    </subcellularLocation>
</comment>
<comment type="similarity">
    <text evidence="1">Belongs to the bacterial glucokinase family.</text>
</comment>
<sequence>MTKYALVGDVGGTNARLALCEIDNGAISQAKTFSTADYDSLEAVIRAYLAEKQQDIKHGCIAIACPITDDWVEMTNHDWAFSTSSMKANLAFDSLEIINDFTAVSMAIPMLSEEHLMQFGGTTPAEDKPVAVYGAGTGLGVAHLVHVDKRWVSLPGEGGHVDFAANSEEEDLILEVLREELGHVSAERILSGNGLVNLYRAIVKSDHRQPEDLKPRDVTERALQDTCTDCRRALSMFCVIMGRFGGNLALNLGTFGGVYIAGGIVPRFLEFFKASGFRAAFEDKGRFKDYVAPIPVYLITHDYPGLLGSGAHLRQTLGRVL</sequence>
<reference key="1">
    <citation type="journal article" date="2008" name="Environ. Microbiol.">
        <title>The genome of Erwinia tasmaniensis strain Et1/99, a non-pathogenic bacterium in the genus Erwinia.</title>
        <authorList>
            <person name="Kube M."/>
            <person name="Migdoll A.M."/>
            <person name="Mueller I."/>
            <person name="Kuhl H."/>
            <person name="Beck A."/>
            <person name="Reinhardt R."/>
            <person name="Geider K."/>
        </authorList>
    </citation>
    <scope>NUCLEOTIDE SEQUENCE [LARGE SCALE GENOMIC DNA]</scope>
    <source>
        <strain>DSM 17950 / CFBP 7177 / CIP 109463 / NCPPB 4357 / Et1/99</strain>
    </source>
</reference>
<organism>
    <name type="scientific">Erwinia tasmaniensis (strain DSM 17950 / CFBP 7177 / CIP 109463 / NCPPB 4357 / Et1/99)</name>
    <dbReference type="NCBI Taxonomy" id="465817"/>
    <lineage>
        <taxon>Bacteria</taxon>
        <taxon>Pseudomonadati</taxon>
        <taxon>Pseudomonadota</taxon>
        <taxon>Gammaproteobacteria</taxon>
        <taxon>Enterobacterales</taxon>
        <taxon>Erwiniaceae</taxon>
        <taxon>Erwinia</taxon>
    </lineage>
</organism>